<evidence type="ECO:0000250" key="1">
    <source>
        <dbReference type="UniProtKB" id="A0A8I3PI99"/>
    </source>
</evidence>
<evidence type="ECO:0000250" key="2">
    <source>
        <dbReference type="UniProtKB" id="Q921L3"/>
    </source>
</evidence>
<evidence type="ECO:0000250" key="3">
    <source>
        <dbReference type="UniProtKB" id="Q9UM00"/>
    </source>
</evidence>
<evidence type="ECO:0000255" key="4"/>
<evidence type="ECO:0000269" key="5">
    <source>
    </source>
</evidence>
<evidence type="ECO:0000305" key="6"/>
<gene>
    <name evidence="3" type="primary">TMCO1</name>
</gene>
<sequence length="188" mass="21175">MSTMFADTLLIVFISVCTALLAEGITWVLVYRTDKYKRLKAEVEKQSKKLEKKKETITESAGRQQKKKIERQEEKLKNNNRDLSMVRMKSMFAIGFCFTALMGMFNSIFDGRVVAKLPFTPLSYIQGLSHRNLLGDDTTDCSFIFLYILCTMSIRQNIQKILGLAPSRAATKQAGGFLGPPPPSGKFS</sequence>
<protein>
    <recommendedName>
        <fullName evidence="3">Calcium load-activated calcium channel</fullName>
        <shortName evidence="3">CLAC channel</shortName>
    </recommendedName>
    <alternativeName>
        <fullName evidence="6">GEL complex subunit TMCO1</fullName>
    </alternativeName>
    <alternativeName>
        <fullName evidence="3">Transmembrane and coiled-coil domain-containing protein 1</fullName>
    </alternativeName>
</protein>
<keyword id="KW-0106">Calcium</keyword>
<keyword id="KW-0107">Calcium channel</keyword>
<keyword id="KW-0109">Calcium transport</keyword>
<keyword id="KW-0175">Coiled coil</keyword>
<keyword id="KW-0256">Endoplasmic reticulum</keyword>
<keyword id="KW-0333">Golgi apparatus</keyword>
<keyword id="KW-0407">Ion channel</keyword>
<keyword id="KW-0406">Ion transport</keyword>
<keyword id="KW-0472">Membrane</keyword>
<keyword id="KW-0496">Mitochondrion</keyword>
<keyword id="KW-0597">Phosphoprotein</keyword>
<keyword id="KW-1185">Reference proteome</keyword>
<keyword id="KW-0812">Transmembrane</keyword>
<keyword id="KW-1133">Transmembrane helix</keyword>
<keyword id="KW-0813">Transport</keyword>
<feature type="chain" id="PRO_0000413773" description="Calcium load-activated calcium channel">
    <location>
        <begin position="1"/>
        <end position="188"/>
    </location>
</feature>
<feature type="topological domain" description="Lumenal" evidence="6">
    <location>
        <begin position="1"/>
        <end position="4"/>
    </location>
</feature>
<feature type="transmembrane region" description="Helical" evidence="1">
    <location>
        <begin position="5"/>
        <end position="32"/>
    </location>
</feature>
<feature type="topological domain" description="Cytoplasmic" evidence="6">
    <location>
        <begin position="33"/>
        <end position="86"/>
    </location>
</feature>
<feature type="transmembrane region" description="Helical" evidence="1">
    <location>
        <begin position="87"/>
        <end position="106"/>
    </location>
</feature>
<feature type="topological domain" description="Lumenal" evidence="6">
    <location>
        <begin position="107"/>
        <end position="120"/>
    </location>
</feature>
<feature type="intramembrane region" evidence="1">
    <location>
        <begin position="121"/>
        <end position="130"/>
    </location>
</feature>
<feature type="topological domain" description="Lumenal" evidence="6">
    <location>
        <begin position="131"/>
        <end position="140"/>
    </location>
</feature>
<feature type="transmembrane region" description="Helical" evidence="1">
    <location>
        <begin position="141"/>
        <end position="162"/>
    </location>
</feature>
<feature type="topological domain" description="Cytoplasmic" evidence="6">
    <location>
        <begin position="163"/>
        <end position="188"/>
    </location>
</feature>
<feature type="coiled-coil region" evidence="4">
    <location>
        <begin position="32"/>
        <end position="89"/>
    </location>
</feature>
<feature type="modified residue" description="Phosphoserine" evidence="3">
    <location>
        <position position="60"/>
    </location>
</feature>
<feature type="modified residue" description="Phosphoserine" evidence="3">
    <location>
        <position position="188"/>
    </location>
</feature>
<organism>
    <name type="scientific">Sus scrofa</name>
    <name type="common">Pig</name>
    <dbReference type="NCBI Taxonomy" id="9823"/>
    <lineage>
        <taxon>Eukaryota</taxon>
        <taxon>Metazoa</taxon>
        <taxon>Chordata</taxon>
        <taxon>Craniata</taxon>
        <taxon>Vertebrata</taxon>
        <taxon>Euteleostomi</taxon>
        <taxon>Mammalia</taxon>
        <taxon>Eutheria</taxon>
        <taxon>Laurasiatheria</taxon>
        <taxon>Artiodactyla</taxon>
        <taxon>Suina</taxon>
        <taxon>Suidae</taxon>
        <taxon>Sus</taxon>
    </lineage>
</organism>
<comment type="function">
    <text evidence="2 3">Endoplasmic reticulum (ER) calcium-selective channel preventing intracellular Ca2(+) stores from overfilling and maintaining calcium homeostasis in the ER. In response to endoplasmic reticulum (ER) Ca2(+) overloading, assembles into a homotetramer, forming a functional calcium-selective channel facilitating Ca2(+) release (By similarity). Mediates ER Ca2(+) homeostasis in osteoblasts and plays a key role in bone formation, via the CaMKII-HDAC4-RUNX2 signaling axis (By similarity). Component of the multi-pass translocon (MPT) complex that mediates insertion of multi-pass membrane proteins into the lipid bilayer of membranes (By similarity). The MPT complex takes over after the SEC61 complex: following membrane insertion of the first few transmembrane segments of proteins by the SEC61 complex, the MPT complex occludes the lateral gate of the SEC61 complex to promote insertion of subsequent transmembrane regions (By similarity). Within the MPT complex, the GEL subcomplex may mediate insertion of transmembrane regions into the membrane (By similarity).</text>
</comment>
<comment type="catalytic activity">
    <reaction evidence="3">
        <text>Ca(2+)(in) = Ca(2+)(out)</text>
        <dbReference type="Rhea" id="RHEA:29671"/>
        <dbReference type="ChEBI" id="CHEBI:29108"/>
    </reaction>
</comment>
<comment type="subunit">
    <text evidence="3">Homodimer and homotetramer. Homodimer under resting conditions; forms homotetramers following ER calcium overload. Component of the GET- and EMC-like (GEL) complex, composed of RAB5IF/OPTI and TMCO1. The GEL complex is part of the multi-pass translocon (MPT) complex, composed of three subcomplexes, the GEL complex (composed of RAB5IF/OPTI and TMCO1), the BOS complex (composed of NCLN/Nicalin, NOMO1 and TMEM147) and the PAT complex (composed of WDR83OS/Asterix and CCDC47). The MPT complex associates with the SEC61 complex.</text>
</comment>
<comment type="subcellular location">
    <subcellularLocation>
        <location evidence="3">Endoplasmic reticulum membrane</location>
        <topology evidence="3">Multi-pass membrane protein</topology>
    </subcellularLocation>
    <subcellularLocation>
        <location evidence="3">Golgi apparatus membrane</location>
        <topology evidence="3">Multi-pass membrane protein</topology>
    </subcellularLocation>
    <subcellularLocation>
        <location evidence="5">Mitochondrion membrane</location>
        <topology evidence="3">Multi-pass membrane protein</topology>
    </subcellularLocation>
    <text evidence="3">The first transmembrane region is required for localization to the endoplasmic reticulum.</text>
</comment>
<comment type="tissue specificity">
    <text evidence="5">Widely expressed, with high levels in liver, kidney and heart, intermediate amounts in back fat, longissimus dorsi, brain, lymph, large intestine, small intestine and lung, and low levels in spleen and stomach.</text>
</comment>
<comment type="similarity">
    <text evidence="6">Belongs to the TMCO1 family.</text>
</comment>
<accession>C5HGF3</accession>
<reference key="1">
    <citation type="journal article" date="2010" name="Mol. Biol. Rep.">
        <title>Molecular cloning, expression patterns and subcellular localization of porcine TMCO1 gene.</title>
        <authorList>
            <person name="Zhang Z."/>
            <person name="Mo D."/>
            <person name="Cong P."/>
            <person name="He Z."/>
            <person name="Ling F."/>
            <person name="Li A."/>
            <person name="Niu Y."/>
            <person name="Zhao X."/>
            <person name="Zhou C."/>
            <person name="Chen Y."/>
        </authorList>
    </citation>
    <scope>NUCLEOTIDE SEQUENCE [MRNA]</scope>
    <scope>TISSUE SPECIFICITY</scope>
    <scope>SUBCELLULAR LOCATION</scope>
</reference>
<reference key="2">
    <citation type="submission" date="2009-11" db="EMBL/GenBank/DDBJ databases">
        <authorList>
            <consortium name="Porcine genome sequencing project"/>
        </authorList>
    </citation>
    <scope>NUCLEOTIDE SEQUENCE [LARGE SCALE GENOMIC DNA]</scope>
</reference>
<dbReference type="EMBL" id="CU468388">
    <property type="status" value="NOT_ANNOTATED_CDS"/>
    <property type="molecule type" value="Genomic_DNA"/>
</dbReference>
<dbReference type="EMBL" id="CU468989">
    <property type="status" value="NOT_ANNOTATED_CDS"/>
    <property type="molecule type" value="Genomic_DNA"/>
</dbReference>
<dbReference type="EMBL" id="FJ440337">
    <property type="protein sequence ID" value="ACN82430.1"/>
    <property type="molecule type" value="mRNA"/>
</dbReference>
<dbReference type="RefSeq" id="NP_001161057.1">
    <property type="nucleotide sequence ID" value="NM_001167585.1"/>
</dbReference>
<dbReference type="SMR" id="C5HGF3"/>
<dbReference type="FunCoup" id="C5HGF3">
    <property type="interactions" value="1561"/>
</dbReference>
<dbReference type="STRING" id="9823.ENSSSCP00000052551"/>
<dbReference type="PaxDb" id="9823-ENSSSCP00000006742"/>
<dbReference type="PeptideAtlas" id="C5HGF3"/>
<dbReference type="Ensembl" id="ENSSSCT00000061642.2">
    <property type="protein sequence ID" value="ENSSSCP00000050094.1"/>
    <property type="gene ID" value="ENSSSCG00000037314.3"/>
</dbReference>
<dbReference type="Ensembl" id="ENSSSCT00015034596.1">
    <property type="protein sequence ID" value="ENSSSCP00015013695.1"/>
    <property type="gene ID" value="ENSSSCG00015025949.1"/>
</dbReference>
<dbReference type="Ensembl" id="ENSSSCT00025042450.1">
    <property type="protein sequence ID" value="ENSSSCP00025018068.1"/>
    <property type="gene ID" value="ENSSSCG00025031143.1"/>
</dbReference>
<dbReference type="Ensembl" id="ENSSSCT00030007371.1">
    <property type="protein sequence ID" value="ENSSSCP00030003287.1"/>
    <property type="gene ID" value="ENSSSCG00030005404.1"/>
</dbReference>
<dbReference type="Ensembl" id="ENSSSCT00035053422.1">
    <property type="protein sequence ID" value="ENSSSCP00035021479.1"/>
    <property type="gene ID" value="ENSSSCG00035040225.1"/>
</dbReference>
<dbReference type="Ensembl" id="ENSSSCT00040053500.1">
    <property type="protein sequence ID" value="ENSSSCP00040022288.1"/>
    <property type="gene ID" value="ENSSSCG00040039848.1"/>
</dbReference>
<dbReference type="Ensembl" id="ENSSSCT00045042867.1">
    <property type="protein sequence ID" value="ENSSSCP00045029771.1"/>
    <property type="gene ID" value="ENSSSCG00045025065.1"/>
</dbReference>
<dbReference type="Ensembl" id="ENSSSCT00050067556.1">
    <property type="protein sequence ID" value="ENSSSCP00050028989.1"/>
    <property type="gene ID" value="ENSSSCG00050049642.1"/>
</dbReference>
<dbReference type="Ensembl" id="ENSSSCT00055016611.1">
    <property type="protein sequence ID" value="ENSSSCP00055013105.1"/>
    <property type="gene ID" value="ENSSSCG00055008466.1"/>
</dbReference>
<dbReference type="Ensembl" id="ENSSSCT00060095236.1">
    <property type="protein sequence ID" value="ENSSSCP00060041210.1"/>
    <property type="gene ID" value="ENSSSCG00060069735.1"/>
</dbReference>
<dbReference type="Ensembl" id="ENSSSCT00065073189.1">
    <property type="protein sequence ID" value="ENSSSCP00065031882.1"/>
    <property type="gene ID" value="ENSSSCG00065053431.1"/>
</dbReference>
<dbReference type="Ensembl" id="ENSSSCT00070049098.1">
    <property type="protein sequence ID" value="ENSSSCP00070041462.1"/>
    <property type="gene ID" value="ENSSSCG00070024519.1"/>
</dbReference>
<dbReference type="Ensembl" id="ENSSSCT00090027828">
    <property type="protein sequence ID" value="ENSSSCP00090017140"/>
    <property type="gene ID" value="ENSSSCG00090015816"/>
</dbReference>
<dbReference type="Ensembl" id="ENSSSCT00105005538">
    <property type="protein sequence ID" value="ENSSSCP00105004104"/>
    <property type="gene ID" value="ENSSSCG00105002804"/>
</dbReference>
<dbReference type="Ensembl" id="ENSSSCT00110021980">
    <property type="protein sequence ID" value="ENSSSCP00110014826"/>
    <property type="gene ID" value="ENSSSCG00110011434"/>
</dbReference>
<dbReference type="Ensembl" id="ENSSSCT00115023783">
    <property type="protein sequence ID" value="ENSSSCP00115022550"/>
    <property type="gene ID" value="ENSSSCG00115013674"/>
</dbReference>
<dbReference type="Ensembl" id="ENSSSCT00130018478">
    <property type="protein sequence ID" value="ENSSSCP00130012479"/>
    <property type="gene ID" value="ENSSSCG00130009857"/>
</dbReference>
<dbReference type="GeneID" id="100151809"/>
<dbReference type="KEGG" id="ssc:100151809"/>
<dbReference type="CTD" id="54499"/>
<dbReference type="VGNC" id="VGNC:94048">
    <property type="gene designation" value="TMCO1"/>
</dbReference>
<dbReference type="eggNOG" id="KOG3312">
    <property type="taxonomic scope" value="Eukaryota"/>
</dbReference>
<dbReference type="GeneTree" id="ENSGT00390000002659"/>
<dbReference type="HOGENOM" id="CLU_081121_0_0_1"/>
<dbReference type="InParanoid" id="C5HGF3"/>
<dbReference type="OMA" id="GMFGDFK"/>
<dbReference type="OrthoDB" id="342726at2759"/>
<dbReference type="TreeFam" id="TF315045"/>
<dbReference type="Proteomes" id="UP000008227">
    <property type="component" value="Chromosome 4"/>
</dbReference>
<dbReference type="Proteomes" id="UP000314985">
    <property type="component" value="Chromosome 4"/>
</dbReference>
<dbReference type="Proteomes" id="UP000694570">
    <property type="component" value="Unplaced"/>
</dbReference>
<dbReference type="Proteomes" id="UP000694571">
    <property type="component" value="Unplaced"/>
</dbReference>
<dbReference type="Proteomes" id="UP000694720">
    <property type="component" value="Unplaced"/>
</dbReference>
<dbReference type="Proteomes" id="UP000694722">
    <property type="component" value="Unplaced"/>
</dbReference>
<dbReference type="Proteomes" id="UP000694723">
    <property type="component" value="Unplaced"/>
</dbReference>
<dbReference type="Proteomes" id="UP000694724">
    <property type="component" value="Unplaced"/>
</dbReference>
<dbReference type="Proteomes" id="UP000694725">
    <property type="component" value="Unplaced"/>
</dbReference>
<dbReference type="Proteomes" id="UP000694726">
    <property type="component" value="Unplaced"/>
</dbReference>
<dbReference type="Proteomes" id="UP000694727">
    <property type="component" value="Unplaced"/>
</dbReference>
<dbReference type="Proteomes" id="UP000694728">
    <property type="component" value="Unplaced"/>
</dbReference>
<dbReference type="Bgee" id="ENSSSCG00000037314">
    <property type="expression patterns" value="Expressed in adult mammalian kidney and 44 other cell types or tissues"/>
</dbReference>
<dbReference type="ExpressionAtlas" id="C5HGF3">
    <property type="expression patterns" value="baseline and differential"/>
</dbReference>
<dbReference type="GO" id="GO:0005737">
    <property type="term" value="C:cytoplasm"/>
    <property type="evidence" value="ECO:0000318"/>
    <property type="project" value="GO_Central"/>
</dbReference>
<dbReference type="GO" id="GO:0005783">
    <property type="term" value="C:endoplasmic reticulum"/>
    <property type="evidence" value="ECO:0000318"/>
    <property type="project" value="GO_Central"/>
</dbReference>
<dbReference type="GO" id="GO:0005789">
    <property type="term" value="C:endoplasmic reticulum membrane"/>
    <property type="evidence" value="ECO:0000250"/>
    <property type="project" value="UniProtKB"/>
</dbReference>
<dbReference type="GO" id="GO:0000139">
    <property type="term" value="C:Golgi membrane"/>
    <property type="evidence" value="ECO:0007669"/>
    <property type="project" value="UniProtKB-SubCell"/>
</dbReference>
<dbReference type="GO" id="GO:0031966">
    <property type="term" value="C:mitochondrial membrane"/>
    <property type="evidence" value="ECO:0007669"/>
    <property type="project" value="UniProtKB-SubCell"/>
</dbReference>
<dbReference type="GO" id="GO:0005739">
    <property type="term" value="C:mitochondrion"/>
    <property type="evidence" value="ECO:0000314"/>
    <property type="project" value="UniProtKB"/>
</dbReference>
<dbReference type="GO" id="GO:0160064">
    <property type="term" value="C:multi-pass translocon complex"/>
    <property type="evidence" value="ECO:0000250"/>
    <property type="project" value="UniProtKB"/>
</dbReference>
<dbReference type="GO" id="GO:0005262">
    <property type="term" value="F:calcium channel activity"/>
    <property type="evidence" value="ECO:0000250"/>
    <property type="project" value="UniProtKB"/>
</dbReference>
<dbReference type="GO" id="GO:0043022">
    <property type="term" value="F:ribosome binding"/>
    <property type="evidence" value="ECO:0000250"/>
    <property type="project" value="UniProtKB"/>
</dbReference>
<dbReference type="GO" id="GO:0070588">
    <property type="term" value="P:calcium ion transmembrane transport"/>
    <property type="evidence" value="ECO:0000250"/>
    <property type="project" value="UniProtKB"/>
</dbReference>
<dbReference type="GO" id="GO:0032469">
    <property type="term" value="P:endoplasmic reticulum calcium ion homeostasis"/>
    <property type="evidence" value="ECO:0000250"/>
    <property type="project" value="UniProtKB"/>
</dbReference>
<dbReference type="GO" id="GO:0006983">
    <property type="term" value="P:ER overload response"/>
    <property type="evidence" value="ECO:0000250"/>
    <property type="project" value="UniProtKB"/>
</dbReference>
<dbReference type="GO" id="GO:0160063">
    <property type="term" value="P:multi-pass transmembrane protein insertion into ER membrane"/>
    <property type="evidence" value="ECO:0000250"/>
    <property type="project" value="UniProtKB"/>
</dbReference>
<dbReference type="GO" id="GO:0001503">
    <property type="term" value="P:ossification"/>
    <property type="evidence" value="ECO:0000250"/>
    <property type="project" value="UniProtKB"/>
</dbReference>
<dbReference type="InterPro" id="IPR002809">
    <property type="entry name" value="EMC3/TMCO1"/>
</dbReference>
<dbReference type="InterPro" id="IPR008559">
    <property type="entry name" value="TMCO1"/>
</dbReference>
<dbReference type="PANTHER" id="PTHR20917:SF0">
    <property type="entry name" value="CALCIUM LOAD-ACTIVATED CALCIUM CHANNEL"/>
    <property type="match status" value="1"/>
</dbReference>
<dbReference type="PANTHER" id="PTHR20917">
    <property type="entry name" value="PNAS-RELATED"/>
    <property type="match status" value="1"/>
</dbReference>
<dbReference type="Pfam" id="PF01956">
    <property type="entry name" value="EMC3_TMCO1"/>
    <property type="match status" value="1"/>
</dbReference>
<dbReference type="PIRSF" id="PIRSF023322">
    <property type="entry name" value="DUF841_euk"/>
    <property type="match status" value="1"/>
</dbReference>
<dbReference type="SMART" id="SM01415">
    <property type="entry name" value="DUF106"/>
    <property type="match status" value="1"/>
</dbReference>
<name>TMCO1_PIG</name>
<proteinExistence type="evidence at transcript level"/>